<name>CTL1_SCHPO</name>
<evidence type="ECO:0000255" key="1"/>
<evidence type="ECO:0000269" key="2">
    <source>
    </source>
</evidence>
<evidence type="ECO:0000305" key="3"/>
<comment type="function">
    <text evidence="2">Required for the normal organization of the preautophagosomal structure (PAS) and for the correct subcellular location of atg9.</text>
</comment>
<comment type="subunit">
    <text evidence="2">Interacts with atg9.</text>
</comment>
<comment type="subcellular location">
    <subcellularLocation>
        <location>Endoplasmic reticulum membrane</location>
        <topology>Multi-pass membrane protein</topology>
    </subcellularLocation>
    <subcellularLocation>
        <location>Preautophagosomal structure membrane</location>
        <topology>Multi-pass membrane protein</topology>
    </subcellularLocation>
</comment>
<comment type="disruption phenotype">
    <text evidence="2">Impairs atg8-processing.</text>
</comment>
<comment type="similarity">
    <text evidence="3">Belongs to the CTL (choline transporter-like) family.</text>
</comment>
<reference key="1">
    <citation type="journal article" date="2002" name="Nature">
        <title>The genome sequence of Schizosaccharomyces pombe.</title>
        <authorList>
            <person name="Wood V."/>
            <person name="Gwilliam R."/>
            <person name="Rajandream M.A."/>
            <person name="Lyne M.H."/>
            <person name="Lyne R."/>
            <person name="Stewart A."/>
            <person name="Sgouros J.G."/>
            <person name="Peat N."/>
            <person name="Hayles J."/>
            <person name="Baker S.G."/>
            <person name="Basham D."/>
            <person name="Bowman S."/>
            <person name="Brooks K."/>
            <person name="Brown D."/>
            <person name="Brown S."/>
            <person name="Chillingworth T."/>
            <person name="Churcher C.M."/>
            <person name="Collins M."/>
            <person name="Connor R."/>
            <person name="Cronin A."/>
            <person name="Davis P."/>
            <person name="Feltwell T."/>
            <person name="Fraser A."/>
            <person name="Gentles S."/>
            <person name="Goble A."/>
            <person name="Hamlin N."/>
            <person name="Harris D.E."/>
            <person name="Hidalgo J."/>
            <person name="Hodgson G."/>
            <person name="Holroyd S."/>
            <person name="Hornsby T."/>
            <person name="Howarth S."/>
            <person name="Huckle E.J."/>
            <person name="Hunt S."/>
            <person name="Jagels K."/>
            <person name="James K.D."/>
            <person name="Jones L."/>
            <person name="Jones M."/>
            <person name="Leather S."/>
            <person name="McDonald S."/>
            <person name="McLean J."/>
            <person name="Mooney P."/>
            <person name="Moule S."/>
            <person name="Mungall K.L."/>
            <person name="Murphy L.D."/>
            <person name="Niblett D."/>
            <person name="Odell C."/>
            <person name="Oliver K."/>
            <person name="O'Neil S."/>
            <person name="Pearson D."/>
            <person name="Quail M.A."/>
            <person name="Rabbinowitsch E."/>
            <person name="Rutherford K.M."/>
            <person name="Rutter S."/>
            <person name="Saunders D."/>
            <person name="Seeger K."/>
            <person name="Sharp S."/>
            <person name="Skelton J."/>
            <person name="Simmonds M.N."/>
            <person name="Squares R."/>
            <person name="Squares S."/>
            <person name="Stevens K."/>
            <person name="Taylor K."/>
            <person name="Taylor R.G."/>
            <person name="Tivey A."/>
            <person name="Walsh S.V."/>
            <person name="Warren T."/>
            <person name="Whitehead S."/>
            <person name="Woodward J.R."/>
            <person name="Volckaert G."/>
            <person name="Aert R."/>
            <person name="Robben J."/>
            <person name="Grymonprez B."/>
            <person name="Weltjens I."/>
            <person name="Vanstreels E."/>
            <person name="Rieger M."/>
            <person name="Schaefer M."/>
            <person name="Mueller-Auer S."/>
            <person name="Gabel C."/>
            <person name="Fuchs M."/>
            <person name="Duesterhoeft A."/>
            <person name="Fritzc C."/>
            <person name="Holzer E."/>
            <person name="Moestl D."/>
            <person name="Hilbert H."/>
            <person name="Borzym K."/>
            <person name="Langer I."/>
            <person name="Beck A."/>
            <person name="Lehrach H."/>
            <person name="Reinhardt R."/>
            <person name="Pohl T.M."/>
            <person name="Eger P."/>
            <person name="Zimmermann W."/>
            <person name="Wedler H."/>
            <person name="Wambutt R."/>
            <person name="Purnelle B."/>
            <person name="Goffeau A."/>
            <person name="Cadieu E."/>
            <person name="Dreano S."/>
            <person name="Gloux S."/>
            <person name="Lelaure V."/>
            <person name="Mottier S."/>
            <person name="Galibert F."/>
            <person name="Aves S.J."/>
            <person name="Xiang Z."/>
            <person name="Hunt C."/>
            <person name="Moore K."/>
            <person name="Hurst S.M."/>
            <person name="Lucas M."/>
            <person name="Rochet M."/>
            <person name="Gaillardin C."/>
            <person name="Tallada V.A."/>
            <person name="Garzon A."/>
            <person name="Thode G."/>
            <person name="Daga R.R."/>
            <person name="Cruzado L."/>
            <person name="Jimenez J."/>
            <person name="Sanchez M."/>
            <person name="del Rey F."/>
            <person name="Benito J."/>
            <person name="Dominguez A."/>
            <person name="Revuelta J.L."/>
            <person name="Moreno S."/>
            <person name="Armstrong J."/>
            <person name="Forsburg S.L."/>
            <person name="Cerutti L."/>
            <person name="Lowe T."/>
            <person name="McCombie W.R."/>
            <person name="Paulsen I."/>
            <person name="Potashkin J."/>
            <person name="Shpakovski G.V."/>
            <person name="Ussery D."/>
            <person name="Barrell B.G."/>
            <person name="Nurse P."/>
        </authorList>
    </citation>
    <scope>NUCLEOTIDE SEQUENCE [LARGE SCALE GENOMIC DNA]</scope>
    <source>
        <strain>972 / ATCC 24843</strain>
    </source>
</reference>
<reference key="2">
    <citation type="journal article" date="2006" name="Nat. Biotechnol.">
        <title>ORFeome cloning and global analysis of protein localization in the fission yeast Schizosaccharomyces pombe.</title>
        <authorList>
            <person name="Matsuyama A."/>
            <person name="Arai R."/>
            <person name="Yashiroda Y."/>
            <person name="Shirai A."/>
            <person name="Kamata A."/>
            <person name="Sekido S."/>
            <person name="Kobayashi Y."/>
            <person name="Hashimoto A."/>
            <person name="Hamamoto M."/>
            <person name="Hiraoka Y."/>
            <person name="Horinouchi S."/>
            <person name="Yoshida M."/>
        </authorList>
    </citation>
    <scope>SUBCELLULAR LOCATION [LARGE SCALE ANALYSIS]</scope>
</reference>
<reference key="3">
    <citation type="journal article" date="2013" name="PLoS Genet.">
        <title>Global analysis of fission yeast mating genes reveals new autophagy factors.</title>
        <authorList>
            <person name="Sun L.L."/>
            <person name="Li M."/>
            <person name="Suo F."/>
            <person name="Liu X.M."/>
            <person name="Shen E.Z."/>
            <person name="Yang B."/>
            <person name="Dong M.Q."/>
            <person name="He W.Z."/>
            <person name="Du L.L."/>
        </authorList>
    </citation>
    <scope>DISRUPTION PHENOTYPE</scope>
    <scope>SUBCELLULAR LOCATION</scope>
    <scope>FUNCTION</scope>
    <scope>INTERACTION WITH ATG9</scope>
</reference>
<organism>
    <name type="scientific">Schizosaccharomyces pombe (strain 972 / ATCC 24843)</name>
    <name type="common">Fission yeast</name>
    <dbReference type="NCBI Taxonomy" id="284812"/>
    <lineage>
        <taxon>Eukaryota</taxon>
        <taxon>Fungi</taxon>
        <taxon>Dikarya</taxon>
        <taxon>Ascomycota</taxon>
        <taxon>Taphrinomycotina</taxon>
        <taxon>Schizosaccharomycetes</taxon>
        <taxon>Schizosaccharomycetales</taxon>
        <taxon>Schizosaccharomycetaceae</taxon>
        <taxon>Schizosaccharomyces</taxon>
    </lineage>
</organism>
<gene>
    <name type="primary">ctl1</name>
    <name type="ORF">SPCC1682.11c</name>
</gene>
<keyword id="KW-0072">Autophagy</keyword>
<keyword id="KW-0256">Endoplasmic reticulum</keyword>
<keyword id="KW-0325">Glycoprotein</keyword>
<keyword id="KW-0472">Membrane</keyword>
<keyword id="KW-0653">Protein transport</keyword>
<keyword id="KW-1185">Reference proteome</keyword>
<keyword id="KW-0812">Transmembrane</keyword>
<keyword id="KW-1133">Transmembrane helix</keyword>
<keyword id="KW-0813">Transport</keyword>
<feature type="chain" id="PRO_0000350953" description="Choline transporter-like protein ctl1">
    <location>
        <begin position="1"/>
        <end position="574"/>
    </location>
</feature>
<feature type="transmembrane region" description="Helical" evidence="1">
    <location>
        <begin position="144"/>
        <end position="164"/>
    </location>
</feature>
<feature type="transmembrane region" description="Helical" evidence="1">
    <location>
        <begin position="189"/>
        <end position="209"/>
    </location>
</feature>
<feature type="transmembrane region" description="Helical" evidence="1">
    <location>
        <begin position="211"/>
        <end position="231"/>
    </location>
</feature>
<feature type="transmembrane region" description="Helical" evidence="1">
    <location>
        <begin position="246"/>
        <end position="266"/>
    </location>
</feature>
<feature type="transmembrane region" description="Helical" evidence="1">
    <location>
        <begin position="291"/>
        <end position="311"/>
    </location>
</feature>
<feature type="transmembrane region" description="Helical" evidence="1">
    <location>
        <begin position="336"/>
        <end position="356"/>
    </location>
</feature>
<feature type="transmembrane region" description="Helical" evidence="1">
    <location>
        <begin position="396"/>
        <end position="416"/>
    </location>
</feature>
<feature type="transmembrane region" description="Helical" evidence="1">
    <location>
        <begin position="434"/>
        <end position="456"/>
    </location>
</feature>
<feature type="transmembrane region" description="Helical" evidence="1">
    <location>
        <begin position="485"/>
        <end position="505"/>
    </location>
</feature>
<feature type="transmembrane region" description="Helical" evidence="1">
    <location>
        <begin position="511"/>
        <end position="531"/>
    </location>
</feature>
<feature type="glycosylation site" description="N-linked (GlcNAc...) asparagine" evidence="1">
    <location>
        <position position="40"/>
    </location>
</feature>
<feature type="glycosylation site" description="N-linked (GlcNAc...) asparagine" evidence="1">
    <location>
        <position position="101"/>
    </location>
</feature>
<feature type="glycosylation site" description="N-linked (GlcNAc...) asparagine" evidence="1">
    <location>
        <position position="457"/>
    </location>
</feature>
<feature type="glycosylation site" description="N-linked (GlcNAc...) asparagine" evidence="1">
    <location>
        <position position="558"/>
    </location>
</feature>
<proteinExistence type="evidence at protein level"/>
<accession>O74441</accession>
<dbReference type="EMBL" id="CU329672">
    <property type="protein sequence ID" value="CAA20677.1"/>
    <property type="molecule type" value="Genomic_DNA"/>
</dbReference>
<dbReference type="PIR" id="T41068">
    <property type="entry name" value="T41068"/>
</dbReference>
<dbReference type="RefSeq" id="NP_587804.1">
    <property type="nucleotide sequence ID" value="NM_001022797.2"/>
</dbReference>
<dbReference type="SMR" id="O74441"/>
<dbReference type="BioGRID" id="275511">
    <property type="interactions" value="23"/>
</dbReference>
<dbReference type="FunCoup" id="O74441">
    <property type="interactions" value="37"/>
</dbReference>
<dbReference type="STRING" id="284812.O74441"/>
<dbReference type="GlyCosmos" id="O74441">
    <property type="glycosylation" value="4 sites, No reported glycans"/>
</dbReference>
<dbReference type="iPTMnet" id="O74441"/>
<dbReference type="PaxDb" id="4896-SPCC1682.11c.1"/>
<dbReference type="EnsemblFungi" id="SPCC1682.11c.1">
    <property type="protein sequence ID" value="SPCC1682.11c.1:pep"/>
    <property type="gene ID" value="SPCC1682.11c"/>
</dbReference>
<dbReference type="GeneID" id="2538935"/>
<dbReference type="KEGG" id="spo:2538935"/>
<dbReference type="PomBase" id="SPCC1682.11c">
    <property type="gene designation" value="ctl1"/>
</dbReference>
<dbReference type="VEuPathDB" id="FungiDB:SPCC1682.11c"/>
<dbReference type="eggNOG" id="KOG1362">
    <property type="taxonomic scope" value="Eukaryota"/>
</dbReference>
<dbReference type="HOGENOM" id="CLU_473404_0_0_1"/>
<dbReference type="InParanoid" id="O74441"/>
<dbReference type="OMA" id="LIVLWTW"/>
<dbReference type="PhylomeDB" id="O74441"/>
<dbReference type="PRO" id="PR:O74441"/>
<dbReference type="Proteomes" id="UP000002485">
    <property type="component" value="Chromosome III"/>
</dbReference>
<dbReference type="GO" id="GO:0005789">
    <property type="term" value="C:endoplasmic reticulum membrane"/>
    <property type="evidence" value="ECO:0007669"/>
    <property type="project" value="UniProtKB-SubCell"/>
</dbReference>
<dbReference type="GO" id="GO:0005794">
    <property type="term" value="C:Golgi apparatus"/>
    <property type="evidence" value="ECO:0000314"/>
    <property type="project" value="PomBase"/>
</dbReference>
<dbReference type="GO" id="GO:0016020">
    <property type="term" value="C:membrane"/>
    <property type="evidence" value="ECO:0000318"/>
    <property type="project" value="GO_Central"/>
</dbReference>
<dbReference type="GO" id="GO:0000407">
    <property type="term" value="C:phagophore assembly site"/>
    <property type="evidence" value="ECO:0000314"/>
    <property type="project" value="PomBase"/>
</dbReference>
<dbReference type="GO" id="GO:0034045">
    <property type="term" value="C:phagophore assembly site membrane"/>
    <property type="evidence" value="ECO:0007669"/>
    <property type="project" value="UniProtKB-SubCell"/>
</dbReference>
<dbReference type="GO" id="GO:0015220">
    <property type="term" value="F:choline transmembrane transporter activity"/>
    <property type="evidence" value="ECO:0000250"/>
    <property type="project" value="PomBase"/>
</dbReference>
<dbReference type="GO" id="GO:0022857">
    <property type="term" value="F:transmembrane transporter activity"/>
    <property type="evidence" value="ECO:0000318"/>
    <property type="project" value="GO_Central"/>
</dbReference>
<dbReference type="GO" id="GO:0016236">
    <property type="term" value="P:macroautophagy"/>
    <property type="evidence" value="ECO:0000315"/>
    <property type="project" value="PomBase"/>
</dbReference>
<dbReference type="GO" id="GO:0015031">
    <property type="term" value="P:protein transport"/>
    <property type="evidence" value="ECO:0007669"/>
    <property type="project" value="UniProtKB-KW"/>
</dbReference>
<dbReference type="GO" id="GO:0055085">
    <property type="term" value="P:transmembrane transport"/>
    <property type="evidence" value="ECO:0000318"/>
    <property type="project" value="GO_Central"/>
</dbReference>
<dbReference type="InterPro" id="IPR007603">
    <property type="entry name" value="Choline_transptr-like"/>
</dbReference>
<dbReference type="PANTHER" id="PTHR12385">
    <property type="entry name" value="CHOLINE TRANSPORTER-LIKE (SLC FAMILY 44)"/>
    <property type="match status" value="1"/>
</dbReference>
<dbReference type="PANTHER" id="PTHR12385:SF88">
    <property type="entry name" value="CHOLINE TRANSPORTER-LIKE PROTEIN CTL1"/>
    <property type="match status" value="1"/>
</dbReference>
<dbReference type="Pfam" id="PF04515">
    <property type="entry name" value="Choline_transpo"/>
    <property type="match status" value="1"/>
</dbReference>
<protein>
    <recommendedName>
        <fullName>Choline transporter-like protein ctl1</fullName>
    </recommendedName>
</protein>
<sequence>MFSDYASRFLAQSRFSSVDQRNFKYPTSRSNLQSVSIDRNSSIDSHETDLSAGSSSLHGLNSLIDSGSIHWQLREQEQSNSHISRNENELFSKENSIYNGNFSENLGVQPNPQTISHESVNEEYTELPYDAHLPSEQKVPDRKWGLTFGFLTLALFTYSFLMVWRTNPNIPPATSPYAAIQKAFPLFHKDAIICMMLSVIWLFCLVAIPRFLYFLLASVPLTMFAFAVYLLKASRIHLETSIQPKLMLLTGIILLVAPILLSYYVWRRRIHFETSFNIIRLACRVIADIPQITLIFISFLFSFYVLIFIWVRLFARLFLRGSTLVGSVWVLPRSSWVLASFYSLHFLWLCTFFHALQCAIISSIVSQWFFYRDTKSSATKTNLVSHFFYHVVSNQYGLCAFSSFLVVITKVPLHFLPTWLRHVSRIVYYMFSKTSASYVTSPLTLAYASIYSVPYMNASKALYQIEQLNRVGLRRRSYYFSKYTLLAARSLLAIGVGVTSWNYSIHENGVFYGYIVGLLGGFLAWLIIGAIEGGLSMIVDALLICSIIDISSCQGDPNGSHCFEAWQLFESNGY</sequence>